<comment type="function">
    <text evidence="1">This is one of the proteins that bind and probably mediate the attachment of the 5S RNA into the large ribosomal subunit, where it forms part of the central protuberance.</text>
</comment>
<comment type="subunit">
    <text evidence="1">Part of the 50S ribosomal subunit; part of the 5S rRNA/L5/L18/L25 subcomplex. Contacts the 5S and 23S rRNAs.</text>
</comment>
<comment type="similarity">
    <text evidence="1">Belongs to the universal ribosomal protein uL18 family.</text>
</comment>
<gene>
    <name evidence="1" type="primary">rplR</name>
    <name type="ordered locus">LCABL_26550</name>
</gene>
<dbReference type="EMBL" id="FM177140">
    <property type="protein sequence ID" value="CAQ67721.1"/>
    <property type="molecule type" value="Genomic_DNA"/>
</dbReference>
<dbReference type="SMR" id="B3WAK2"/>
<dbReference type="KEGG" id="lcb:LCABL_26550"/>
<dbReference type="HOGENOM" id="CLU_098841_0_1_9"/>
<dbReference type="GO" id="GO:0022625">
    <property type="term" value="C:cytosolic large ribosomal subunit"/>
    <property type="evidence" value="ECO:0007669"/>
    <property type="project" value="TreeGrafter"/>
</dbReference>
<dbReference type="GO" id="GO:0008097">
    <property type="term" value="F:5S rRNA binding"/>
    <property type="evidence" value="ECO:0007669"/>
    <property type="project" value="TreeGrafter"/>
</dbReference>
<dbReference type="GO" id="GO:0003735">
    <property type="term" value="F:structural constituent of ribosome"/>
    <property type="evidence" value="ECO:0007669"/>
    <property type="project" value="InterPro"/>
</dbReference>
<dbReference type="GO" id="GO:0006412">
    <property type="term" value="P:translation"/>
    <property type="evidence" value="ECO:0007669"/>
    <property type="project" value="UniProtKB-UniRule"/>
</dbReference>
<dbReference type="CDD" id="cd00432">
    <property type="entry name" value="Ribosomal_L18_L5e"/>
    <property type="match status" value="1"/>
</dbReference>
<dbReference type="FunFam" id="3.30.420.100:FF:000001">
    <property type="entry name" value="50S ribosomal protein L18"/>
    <property type="match status" value="1"/>
</dbReference>
<dbReference type="Gene3D" id="3.30.420.100">
    <property type="match status" value="1"/>
</dbReference>
<dbReference type="HAMAP" id="MF_01337_B">
    <property type="entry name" value="Ribosomal_uL18_B"/>
    <property type="match status" value="1"/>
</dbReference>
<dbReference type="InterPro" id="IPR004389">
    <property type="entry name" value="Ribosomal_uL18_bac-type"/>
</dbReference>
<dbReference type="InterPro" id="IPR005484">
    <property type="entry name" value="Ribosomal_uL18_bac/euk"/>
</dbReference>
<dbReference type="NCBIfam" id="TIGR00060">
    <property type="entry name" value="L18_bact"/>
    <property type="match status" value="1"/>
</dbReference>
<dbReference type="PANTHER" id="PTHR12899">
    <property type="entry name" value="39S RIBOSOMAL PROTEIN L18, MITOCHONDRIAL"/>
    <property type="match status" value="1"/>
</dbReference>
<dbReference type="PANTHER" id="PTHR12899:SF3">
    <property type="entry name" value="LARGE RIBOSOMAL SUBUNIT PROTEIN UL18M"/>
    <property type="match status" value="1"/>
</dbReference>
<dbReference type="Pfam" id="PF00861">
    <property type="entry name" value="Ribosomal_L18p"/>
    <property type="match status" value="1"/>
</dbReference>
<dbReference type="SUPFAM" id="SSF53137">
    <property type="entry name" value="Translational machinery components"/>
    <property type="match status" value="1"/>
</dbReference>
<sequence length="119" mass="13001">MISKPDKNKTRQRRHARVRGKISGTSERPRLNIFRSNKNIYAQLIDDVAGVTLASASTLDKDIKDPENKTAASAQVGALIAKRAVADGHKVVVFDRGGYLYHGRVAALAEAARENGLEF</sequence>
<keyword id="KW-0687">Ribonucleoprotein</keyword>
<keyword id="KW-0689">Ribosomal protein</keyword>
<keyword id="KW-0694">RNA-binding</keyword>
<keyword id="KW-0699">rRNA-binding</keyword>
<evidence type="ECO:0000255" key="1">
    <source>
        <dbReference type="HAMAP-Rule" id="MF_01337"/>
    </source>
</evidence>
<evidence type="ECO:0000256" key="2">
    <source>
        <dbReference type="SAM" id="MobiDB-lite"/>
    </source>
</evidence>
<evidence type="ECO:0000305" key="3"/>
<feature type="chain" id="PRO_1000142681" description="Large ribosomal subunit protein uL18">
    <location>
        <begin position="1"/>
        <end position="119"/>
    </location>
</feature>
<feature type="region of interest" description="Disordered" evidence="2">
    <location>
        <begin position="1"/>
        <end position="23"/>
    </location>
</feature>
<feature type="compositionally biased region" description="Basic residues" evidence="2">
    <location>
        <begin position="10"/>
        <end position="20"/>
    </location>
</feature>
<proteinExistence type="inferred from homology"/>
<protein>
    <recommendedName>
        <fullName evidence="1">Large ribosomal subunit protein uL18</fullName>
    </recommendedName>
    <alternativeName>
        <fullName evidence="3">50S ribosomal protein L18</fullName>
    </alternativeName>
</protein>
<name>RL18_LACCB</name>
<organism>
    <name type="scientific">Lacticaseibacillus casei (strain BL23)</name>
    <name type="common">Lactobacillus casei</name>
    <dbReference type="NCBI Taxonomy" id="543734"/>
    <lineage>
        <taxon>Bacteria</taxon>
        <taxon>Bacillati</taxon>
        <taxon>Bacillota</taxon>
        <taxon>Bacilli</taxon>
        <taxon>Lactobacillales</taxon>
        <taxon>Lactobacillaceae</taxon>
        <taxon>Lacticaseibacillus</taxon>
    </lineage>
</organism>
<reference key="1">
    <citation type="submission" date="2008-06" db="EMBL/GenBank/DDBJ databases">
        <title>Lactobacillus casei BL23 complete genome sequence.</title>
        <authorList>
            <person name="Maze A."/>
            <person name="Boel G."/>
            <person name="Bourand A."/>
            <person name="Loux V."/>
            <person name="Gibrat J.F."/>
            <person name="Zuniga M."/>
            <person name="Hartke A."/>
            <person name="Deutscher J."/>
        </authorList>
    </citation>
    <scope>NUCLEOTIDE SEQUENCE [LARGE SCALE GENOMIC DNA]</scope>
    <source>
        <strain>BL23</strain>
    </source>
</reference>
<accession>B3WAK2</accession>